<organism>
    <name type="scientific">Shigella flexneri serotype 5b (strain 8401)</name>
    <dbReference type="NCBI Taxonomy" id="373384"/>
    <lineage>
        <taxon>Bacteria</taxon>
        <taxon>Pseudomonadati</taxon>
        <taxon>Pseudomonadota</taxon>
        <taxon>Gammaproteobacteria</taxon>
        <taxon>Enterobacterales</taxon>
        <taxon>Enterobacteriaceae</taxon>
        <taxon>Shigella</taxon>
    </lineage>
</organism>
<comment type="function">
    <text evidence="1">Catalyzes the NAD-dependent reduction of succinylglutamate semialdehyde into succinylglutamate.</text>
</comment>
<comment type="catalytic activity">
    <reaction evidence="1">
        <text>N-succinyl-L-glutamate 5-semialdehyde + NAD(+) + H2O = N-succinyl-L-glutamate + NADH + 2 H(+)</text>
        <dbReference type="Rhea" id="RHEA:10812"/>
        <dbReference type="ChEBI" id="CHEBI:15377"/>
        <dbReference type="ChEBI" id="CHEBI:15378"/>
        <dbReference type="ChEBI" id="CHEBI:57540"/>
        <dbReference type="ChEBI" id="CHEBI:57945"/>
        <dbReference type="ChEBI" id="CHEBI:58520"/>
        <dbReference type="ChEBI" id="CHEBI:58763"/>
        <dbReference type="EC" id="1.2.1.71"/>
    </reaction>
</comment>
<comment type="pathway">
    <text evidence="1">Amino-acid degradation; L-arginine degradation via AST pathway; L-glutamate and succinate from L-arginine: step 4/5.</text>
</comment>
<comment type="similarity">
    <text evidence="1">Belongs to the aldehyde dehydrogenase family. AstD subfamily.</text>
</comment>
<accession>Q0T4V3</accession>
<name>ASTD_SHIF8</name>
<protein>
    <recommendedName>
        <fullName evidence="1">N-succinylglutamate 5-semialdehyde dehydrogenase</fullName>
        <ecNumber evidence="1">1.2.1.71</ecNumber>
    </recommendedName>
    <alternativeName>
        <fullName evidence="1">Succinylglutamic semialdehyde dehydrogenase</fullName>
        <shortName evidence="1">SGSD</shortName>
    </alternativeName>
</protein>
<gene>
    <name evidence="1" type="primary">astD</name>
    <name type="ordered locus">SFV_1474</name>
</gene>
<proteinExistence type="inferred from homology"/>
<reference key="1">
    <citation type="journal article" date="2006" name="BMC Genomics">
        <title>Complete genome sequence of Shigella flexneri 5b and comparison with Shigella flexneri 2a.</title>
        <authorList>
            <person name="Nie H."/>
            <person name="Yang F."/>
            <person name="Zhang X."/>
            <person name="Yang J."/>
            <person name="Chen L."/>
            <person name="Wang J."/>
            <person name="Xiong Z."/>
            <person name="Peng J."/>
            <person name="Sun L."/>
            <person name="Dong J."/>
            <person name="Xue Y."/>
            <person name="Xu X."/>
            <person name="Chen S."/>
            <person name="Yao Z."/>
            <person name="Shen Y."/>
            <person name="Jin Q."/>
        </authorList>
    </citation>
    <scope>NUCLEOTIDE SEQUENCE [LARGE SCALE GENOMIC DNA]</scope>
    <source>
        <strain>8401</strain>
    </source>
</reference>
<evidence type="ECO:0000255" key="1">
    <source>
        <dbReference type="HAMAP-Rule" id="MF_01174"/>
    </source>
</evidence>
<feature type="chain" id="PRO_1000065769" description="N-succinylglutamate 5-semialdehyde dehydrogenase">
    <location>
        <begin position="1"/>
        <end position="492"/>
    </location>
</feature>
<feature type="active site" evidence="1">
    <location>
        <position position="243"/>
    </location>
</feature>
<feature type="active site" evidence="1">
    <location>
        <position position="277"/>
    </location>
</feature>
<feature type="binding site" evidence="1">
    <location>
        <begin position="220"/>
        <end position="225"/>
    </location>
    <ligand>
        <name>NAD(+)</name>
        <dbReference type="ChEBI" id="CHEBI:57540"/>
    </ligand>
</feature>
<dbReference type="EC" id="1.2.1.71" evidence="1"/>
<dbReference type="EMBL" id="CP000266">
    <property type="protein sequence ID" value="ABF03662.1"/>
    <property type="molecule type" value="Genomic_DNA"/>
</dbReference>
<dbReference type="RefSeq" id="WP_000177222.1">
    <property type="nucleotide sequence ID" value="NC_008258.1"/>
</dbReference>
<dbReference type="SMR" id="Q0T4V3"/>
<dbReference type="KEGG" id="sfv:SFV_1474"/>
<dbReference type="HOGENOM" id="CLU_005391_1_0_6"/>
<dbReference type="UniPathway" id="UPA00185">
    <property type="reaction ID" value="UER00282"/>
</dbReference>
<dbReference type="Proteomes" id="UP000000659">
    <property type="component" value="Chromosome"/>
</dbReference>
<dbReference type="GO" id="GO:0043824">
    <property type="term" value="F:succinylglutamate-semialdehyde dehydrogenase activity"/>
    <property type="evidence" value="ECO:0007669"/>
    <property type="project" value="UniProtKB-EC"/>
</dbReference>
<dbReference type="GO" id="GO:0019544">
    <property type="term" value="P:arginine catabolic process to glutamate"/>
    <property type="evidence" value="ECO:0007669"/>
    <property type="project" value="UniProtKB-UniRule"/>
</dbReference>
<dbReference type="GO" id="GO:0019545">
    <property type="term" value="P:arginine catabolic process to succinate"/>
    <property type="evidence" value="ECO:0007669"/>
    <property type="project" value="UniProtKB-UniRule"/>
</dbReference>
<dbReference type="CDD" id="cd07095">
    <property type="entry name" value="ALDH_SGSD_AstD"/>
    <property type="match status" value="1"/>
</dbReference>
<dbReference type="FunFam" id="3.40.309.10:FF:000013">
    <property type="entry name" value="N-succinylglutamate 5-semialdehyde dehydrogenase"/>
    <property type="match status" value="1"/>
</dbReference>
<dbReference type="FunFam" id="3.40.605.10:FF:000010">
    <property type="entry name" value="N-succinylglutamate 5-semialdehyde dehydrogenase"/>
    <property type="match status" value="1"/>
</dbReference>
<dbReference type="Gene3D" id="3.40.605.10">
    <property type="entry name" value="Aldehyde Dehydrogenase, Chain A, domain 1"/>
    <property type="match status" value="1"/>
</dbReference>
<dbReference type="Gene3D" id="3.40.309.10">
    <property type="entry name" value="Aldehyde Dehydrogenase, Chain A, domain 2"/>
    <property type="match status" value="1"/>
</dbReference>
<dbReference type="HAMAP" id="MF_01174">
    <property type="entry name" value="Aldedh_AstD"/>
    <property type="match status" value="1"/>
</dbReference>
<dbReference type="InterPro" id="IPR016161">
    <property type="entry name" value="Ald_DH/histidinol_DH"/>
</dbReference>
<dbReference type="InterPro" id="IPR016163">
    <property type="entry name" value="Ald_DH_C"/>
</dbReference>
<dbReference type="InterPro" id="IPR016160">
    <property type="entry name" value="Ald_DH_CS_CYS"/>
</dbReference>
<dbReference type="InterPro" id="IPR029510">
    <property type="entry name" value="Ald_DH_CS_GLU"/>
</dbReference>
<dbReference type="InterPro" id="IPR016162">
    <property type="entry name" value="Ald_DH_N"/>
</dbReference>
<dbReference type="InterPro" id="IPR015590">
    <property type="entry name" value="Aldehyde_DH_dom"/>
</dbReference>
<dbReference type="InterPro" id="IPR017649">
    <property type="entry name" value="SuccinylGlu_semiald_DH_AstD"/>
</dbReference>
<dbReference type="NCBIfam" id="TIGR03240">
    <property type="entry name" value="arg_catab_astD"/>
    <property type="match status" value="1"/>
</dbReference>
<dbReference type="NCBIfam" id="NF006992">
    <property type="entry name" value="PRK09457.1"/>
    <property type="match status" value="1"/>
</dbReference>
<dbReference type="PANTHER" id="PTHR11699">
    <property type="entry name" value="ALDEHYDE DEHYDROGENASE-RELATED"/>
    <property type="match status" value="1"/>
</dbReference>
<dbReference type="Pfam" id="PF00171">
    <property type="entry name" value="Aldedh"/>
    <property type="match status" value="1"/>
</dbReference>
<dbReference type="SUPFAM" id="SSF53720">
    <property type="entry name" value="ALDH-like"/>
    <property type="match status" value="1"/>
</dbReference>
<dbReference type="PROSITE" id="PS00070">
    <property type="entry name" value="ALDEHYDE_DEHYDR_CYS"/>
    <property type="match status" value="1"/>
</dbReference>
<dbReference type="PROSITE" id="PS00687">
    <property type="entry name" value="ALDEHYDE_DEHYDR_GLU"/>
    <property type="match status" value="1"/>
</dbReference>
<keyword id="KW-0056">Arginine metabolism</keyword>
<keyword id="KW-0520">NAD</keyword>
<keyword id="KW-0560">Oxidoreductase</keyword>
<sequence>MTLWINGDWITGQGASRVKRNPVSGEVLWQGNDADAAQVEQACRAARAAFPRWARLSLAERQVVVERFAGLLESNKAELTAIIARETGKPRWEAATEVTAMINKIAISIKAYHVRTGEQRSEMPDGAASLRHRPHGVLAVFGPYNFPGHLPNGHIVPALLAGNTIIFKPSELTPWSGEAVMRLWQQAGLPPGVLNLVQGGRETGQALSALEDLDGLLFTGSANTGYQLHRQLSGQPEKILALEMGGNNPLIIDEVADIDAAVHLTIQSAFVTAGQRCTCARRLLLKSGAQGDAFLASLVAVSQRLTPGNWDDEPQPFIGGLISEQAAQQVVTAWQQLEAMGGRTLLAPRLLQAGTSLLTPGIIEMTGVGGVPDEEVFGPLLRVWRYDTFDEAIRMANNTRFGLFCGLVSPEREKFDQLLLEARAGIVNWNKPLTGAASTAPFGGIGASGNHRPSAWYAADYCAWPMASLESDSLTLPATLNPGLDFSDEVVR</sequence>